<protein>
    <recommendedName>
        <fullName evidence="2">Ornithine carbamoyltransferase</fullName>
        <shortName evidence="2">OTCase</shortName>
        <ecNumber evidence="2">2.1.3.3</ecNumber>
    </recommendedName>
</protein>
<accession>Q57F56</accession>
<reference key="1">
    <citation type="journal article" date="2005" name="J. Bacteriol.">
        <title>Completion of the genome sequence of Brucella abortus and comparison to the highly similar genomes of Brucella melitensis and Brucella suis.</title>
        <authorList>
            <person name="Halling S.M."/>
            <person name="Peterson-Burch B.D."/>
            <person name="Bricker B.J."/>
            <person name="Zuerner R.L."/>
            <person name="Qing Z."/>
            <person name="Li L.-L."/>
            <person name="Kapur V."/>
            <person name="Alt D.P."/>
            <person name="Olsen S.C."/>
        </authorList>
    </citation>
    <scope>NUCLEOTIDE SEQUENCE [LARGE SCALE GENOMIC DNA]</scope>
    <source>
        <strain>9-941</strain>
    </source>
</reference>
<dbReference type="EC" id="2.1.3.3" evidence="2"/>
<dbReference type="EMBL" id="AE017223">
    <property type="protein sequence ID" value="AAX73728.1"/>
    <property type="molecule type" value="Genomic_DNA"/>
</dbReference>
<dbReference type="RefSeq" id="WP_002963466.1">
    <property type="nucleotide sequence ID" value="NC_006932.1"/>
</dbReference>
<dbReference type="SMR" id="Q57F56"/>
<dbReference type="EnsemblBacteria" id="AAX73728">
    <property type="protein sequence ID" value="AAX73728"/>
    <property type="gene ID" value="BruAb1_0328"/>
</dbReference>
<dbReference type="GeneID" id="93017231"/>
<dbReference type="KEGG" id="bmb:BruAb1_0328"/>
<dbReference type="HOGENOM" id="CLU_043846_3_2_5"/>
<dbReference type="UniPathway" id="UPA00068">
    <property type="reaction ID" value="UER00112"/>
</dbReference>
<dbReference type="Proteomes" id="UP000000540">
    <property type="component" value="Chromosome I"/>
</dbReference>
<dbReference type="GO" id="GO:0005737">
    <property type="term" value="C:cytoplasm"/>
    <property type="evidence" value="ECO:0007669"/>
    <property type="project" value="UniProtKB-SubCell"/>
</dbReference>
<dbReference type="GO" id="GO:0016597">
    <property type="term" value="F:amino acid binding"/>
    <property type="evidence" value="ECO:0007669"/>
    <property type="project" value="InterPro"/>
</dbReference>
<dbReference type="GO" id="GO:0004585">
    <property type="term" value="F:ornithine carbamoyltransferase activity"/>
    <property type="evidence" value="ECO:0007669"/>
    <property type="project" value="UniProtKB-UniRule"/>
</dbReference>
<dbReference type="GO" id="GO:0042450">
    <property type="term" value="P:arginine biosynthetic process via ornithine"/>
    <property type="evidence" value="ECO:0007669"/>
    <property type="project" value="TreeGrafter"/>
</dbReference>
<dbReference type="GO" id="GO:0019240">
    <property type="term" value="P:citrulline biosynthetic process"/>
    <property type="evidence" value="ECO:0007669"/>
    <property type="project" value="TreeGrafter"/>
</dbReference>
<dbReference type="GO" id="GO:0006526">
    <property type="term" value="P:L-arginine biosynthetic process"/>
    <property type="evidence" value="ECO:0007669"/>
    <property type="project" value="UniProtKB-UniRule"/>
</dbReference>
<dbReference type="FunFam" id="3.40.50.1370:FF:000008">
    <property type="entry name" value="Ornithine carbamoyltransferase"/>
    <property type="match status" value="1"/>
</dbReference>
<dbReference type="FunFam" id="3.40.50.1370:FF:000016">
    <property type="entry name" value="Ornithine carbamoyltransferase"/>
    <property type="match status" value="1"/>
</dbReference>
<dbReference type="Gene3D" id="3.40.50.1370">
    <property type="entry name" value="Aspartate/ornithine carbamoyltransferase"/>
    <property type="match status" value="2"/>
</dbReference>
<dbReference type="HAMAP" id="MF_01109">
    <property type="entry name" value="OTCase"/>
    <property type="match status" value="1"/>
</dbReference>
<dbReference type="InterPro" id="IPR006132">
    <property type="entry name" value="Asp/Orn_carbamoyltranf_P-bd"/>
</dbReference>
<dbReference type="InterPro" id="IPR006130">
    <property type="entry name" value="Asp/Orn_carbamoylTrfase"/>
</dbReference>
<dbReference type="InterPro" id="IPR036901">
    <property type="entry name" value="Asp/Orn_carbamoylTrfase_sf"/>
</dbReference>
<dbReference type="InterPro" id="IPR006131">
    <property type="entry name" value="Asp_carbamoyltransf_Asp/Orn-bd"/>
</dbReference>
<dbReference type="InterPro" id="IPR002292">
    <property type="entry name" value="Orn/put_carbamltrans"/>
</dbReference>
<dbReference type="InterPro" id="IPR024904">
    <property type="entry name" value="OTCase_ArgI"/>
</dbReference>
<dbReference type="NCBIfam" id="TIGR00658">
    <property type="entry name" value="orni_carb_tr"/>
    <property type="match status" value="1"/>
</dbReference>
<dbReference type="NCBIfam" id="NF001986">
    <property type="entry name" value="PRK00779.1"/>
    <property type="match status" value="1"/>
</dbReference>
<dbReference type="PANTHER" id="PTHR45753">
    <property type="entry name" value="ORNITHINE CARBAMOYLTRANSFERASE, MITOCHONDRIAL"/>
    <property type="match status" value="1"/>
</dbReference>
<dbReference type="PANTHER" id="PTHR45753:SF3">
    <property type="entry name" value="ORNITHINE TRANSCARBAMYLASE, MITOCHONDRIAL"/>
    <property type="match status" value="1"/>
</dbReference>
<dbReference type="Pfam" id="PF00185">
    <property type="entry name" value="OTCace"/>
    <property type="match status" value="1"/>
</dbReference>
<dbReference type="Pfam" id="PF02729">
    <property type="entry name" value="OTCace_N"/>
    <property type="match status" value="1"/>
</dbReference>
<dbReference type="PRINTS" id="PR00100">
    <property type="entry name" value="AOTCASE"/>
</dbReference>
<dbReference type="PRINTS" id="PR00102">
    <property type="entry name" value="OTCASE"/>
</dbReference>
<dbReference type="SUPFAM" id="SSF53671">
    <property type="entry name" value="Aspartate/ornithine carbamoyltransferase"/>
    <property type="match status" value="1"/>
</dbReference>
<dbReference type="PROSITE" id="PS00097">
    <property type="entry name" value="CARBAMOYLTRANSFERASE"/>
    <property type="match status" value="1"/>
</dbReference>
<keyword id="KW-0028">Amino-acid biosynthesis</keyword>
<keyword id="KW-0055">Arginine biosynthesis</keyword>
<keyword id="KW-0963">Cytoplasm</keyword>
<keyword id="KW-0808">Transferase</keyword>
<comment type="function">
    <text evidence="1">Reversibly catalyzes the transfer of the carbamoyl group from carbamoyl phosphate (CP) to the N(epsilon) atom of ornithine (ORN) to produce L-citrulline.</text>
</comment>
<comment type="catalytic activity">
    <reaction evidence="2">
        <text>carbamoyl phosphate + L-ornithine = L-citrulline + phosphate + H(+)</text>
        <dbReference type="Rhea" id="RHEA:19513"/>
        <dbReference type="ChEBI" id="CHEBI:15378"/>
        <dbReference type="ChEBI" id="CHEBI:43474"/>
        <dbReference type="ChEBI" id="CHEBI:46911"/>
        <dbReference type="ChEBI" id="CHEBI:57743"/>
        <dbReference type="ChEBI" id="CHEBI:58228"/>
        <dbReference type="EC" id="2.1.3.3"/>
    </reaction>
</comment>
<comment type="pathway">
    <text evidence="2">Amino-acid biosynthesis; L-arginine biosynthesis; L-arginine from L-ornithine and carbamoyl phosphate: step 1/3.</text>
</comment>
<comment type="subcellular location">
    <subcellularLocation>
        <location evidence="2">Cytoplasm</location>
    </subcellularLocation>
</comment>
<comment type="similarity">
    <text evidence="2">Belongs to the aspartate/ornithine carbamoyltransferase superfamily. OTCase family.</text>
</comment>
<organism>
    <name type="scientific">Brucella abortus biovar 1 (strain 9-941)</name>
    <dbReference type="NCBI Taxonomy" id="262698"/>
    <lineage>
        <taxon>Bacteria</taxon>
        <taxon>Pseudomonadati</taxon>
        <taxon>Pseudomonadota</taxon>
        <taxon>Alphaproteobacteria</taxon>
        <taxon>Hyphomicrobiales</taxon>
        <taxon>Brucellaceae</taxon>
        <taxon>Brucella/Ochrobactrum group</taxon>
        <taxon>Brucella</taxon>
    </lineage>
</organism>
<sequence length="312" mass="34239">MANDNGIKHFIDLSTVPATELRAILEDAKARKARLKAGEVERPYAGKVLAMIFEKLSTRTRVSFDVGMRQLGGETIMLTGSEMQLGRSETIADTAKVLSRYVDAIMIRTTAHERMLELAEYATVPVINALTDDTHPCQIMADVLTYEEHRGPIKGKTFAWMGDGNNVLHSLVEAAARFDFNVNIATPKGSEPKSQYIDWARANGAGIMSTTDPEKAASGADCIVTDTWVSMGQEDHARGHNVFIPYQVNANLMAKADPKALFMHCLPAHRGEEVTDEVIDGPQSVVFDEAENRLHAQKAILAWCLQDRGLGA</sequence>
<proteinExistence type="inferred from homology"/>
<feature type="chain" id="PRO_1000065077" description="Ornithine carbamoyltransferase">
    <location>
        <begin position="1"/>
        <end position="312"/>
    </location>
</feature>
<feature type="binding site" evidence="2">
    <location>
        <begin position="57"/>
        <end position="60"/>
    </location>
    <ligand>
        <name>carbamoyl phosphate</name>
        <dbReference type="ChEBI" id="CHEBI:58228"/>
    </ligand>
</feature>
<feature type="binding site" evidence="2">
    <location>
        <position position="84"/>
    </location>
    <ligand>
        <name>carbamoyl phosphate</name>
        <dbReference type="ChEBI" id="CHEBI:58228"/>
    </ligand>
</feature>
<feature type="binding site" evidence="2">
    <location>
        <position position="108"/>
    </location>
    <ligand>
        <name>carbamoyl phosphate</name>
        <dbReference type="ChEBI" id="CHEBI:58228"/>
    </ligand>
</feature>
<feature type="binding site" evidence="2">
    <location>
        <begin position="135"/>
        <end position="138"/>
    </location>
    <ligand>
        <name>carbamoyl phosphate</name>
        <dbReference type="ChEBI" id="CHEBI:58228"/>
    </ligand>
</feature>
<feature type="binding site" evidence="2">
    <location>
        <position position="166"/>
    </location>
    <ligand>
        <name>L-ornithine</name>
        <dbReference type="ChEBI" id="CHEBI:46911"/>
    </ligand>
</feature>
<feature type="binding site" evidence="2">
    <location>
        <position position="226"/>
    </location>
    <ligand>
        <name>L-ornithine</name>
        <dbReference type="ChEBI" id="CHEBI:46911"/>
    </ligand>
</feature>
<feature type="binding site" evidence="2">
    <location>
        <begin position="230"/>
        <end position="231"/>
    </location>
    <ligand>
        <name>L-ornithine</name>
        <dbReference type="ChEBI" id="CHEBI:46911"/>
    </ligand>
</feature>
<feature type="binding site" evidence="2">
    <location>
        <begin position="265"/>
        <end position="266"/>
    </location>
    <ligand>
        <name>carbamoyl phosphate</name>
        <dbReference type="ChEBI" id="CHEBI:58228"/>
    </ligand>
</feature>
<feature type="binding site" evidence="2">
    <location>
        <position position="293"/>
    </location>
    <ligand>
        <name>carbamoyl phosphate</name>
        <dbReference type="ChEBI" id="CHEBI:58228"/>
    </ligand>
</feature>
<gene>
    <name evidence="2" type="primary">argF</name>
    <name type="ordered locus">BruAb1_0328</name>
</gene>
<evidence type="ECO:0000250" key="1"/>
<evidence type="ECO:0000255" key="2">
    <source>
        <dbReference type="HAMAP-Rule" id="MF_01109"/>
    </source>
</evidence>
<name>OTC_BRUAB</name>